<protein>
    <recommendedName>
        <fullName>Genome polyprotein</fullName>
    </recommendedName>
    <component>
        <recommendedName>
            <fullName>P1 proteinase</fullName>
            <ecNumber evidence="2">3.4.-.-</ecNumber>
        </recommendedName>
        <alternativeName>
            <fullName>N-terminal protein</fullName>
        </alternativeName>
    </component>
    <component>
        <recommendedName>
            <fullName>Helper component proteinase</fullName>
            <shortName>HC-pro</shortName>
            <ecNumber evidence="2">3.4.22.45</ecNumber>
        </recommendedName>
    </component>
    <component>
        <recommendedName>
            <fullName>Protein P3</fullName>
        </recommendedName>
    </component>
    <component>
        <recommendedName>
            <fullName>6 kDa protein 1</fullName>
            <shortName>6K1</shortName>
        </recommendedName>
    </component>
    <component>
        <recommendedName>
            <fullName>Cytoplasmic inclusion protein</fullName>
            <shortName>CI</shortName>
            <ecNumber>3.6.4.-</ecNumber>
        </recommendedName>
    </component>
    <component>
        <recommendedName>
            <fullName>6 kDa protein 2</fullName>
            <shortName>6K2</shortName>
        </recommendedName>
    </component>
    <component>
        <recommendedName>
            <fullName>Viral genome-linked protein</fullName>
        </recommendedName>
        <alternativeName>
            <fullName>VPg</fullName>
        </alternativeName>
    </component>
    <component>
        <recommendedName>
            <fullName>Nuclear inclusion protein A</fullName>
            <shortName>NI-a</shortName>
            <shortName>NIa</shortName>
            <ecNumber>3.4.22.44</ecNumber>
        </recommendedName>
        <alternativeName>
            <fullName>49 kDa proteinase</fullName>
            <shortName>49 kDa-Pro</shortName>
        </alternativeName>
        <alternativeName>
            <fullName>NIa-pro</fullName>
        </alternativeName>
    </component>
    <component>
        <recommendedName>
            <fullName>Nuclear inclusion protein B</fullName>
            <shortName>NI-b</shortName>
            <shortName>NIb</shortName>
            <ecNumber>2.7.7.48</ecNumber>
        </recommendedName>
        <alternativeName>
            <fullName>RNA-directed RNA polymerase</fullName>
        </alternativeName>
    </component>
    <component>
        <recommendedName>
            <fullName>Capsid protein</fullName>
            <shortName>CP</shortName>
        </recommendedName>
        <alternativeName>
            <fullName>Coat protein</fullName>
        </alternativeName>
    </component>
</protein>
<comment type="function">
    <molecule>Helper component proteinase</molecule>
    <text evidence="2">Required for aphid transmission and also has proteolytic activity. Only cleaves a Gly-Gly dipeptide at its own C-terminus. Interacts with virions and aphid stylets. Acts as a suppressor of RNA-mediated gene silencing, also known as post-transcriptional gene silencing (PTGS), a mechanism of plant viral defense that limits the accumulation of viral RNAs. May have RNA-binding activity.</text>
</comment>
<comment type="function">
    <molecule>Cytoplasmic inclusion protein</molecule>
    <text>Has helicase activity. It may be involved in replication.</text>
</comment>
<comment type="function">
    <molecule>6 kDa protein 1</molecule>
    <text evidence="4">Indispensable for virus replication.</text>
</comment>
<comment type="function">
    <molecule>6 kDa protein 2</molecule>
    <text evidence="3">Indispensable for virus replication.</text>
</comment>
<comment type="function">
    <molecule>Viral genome-linked protein</molecule>
    <text evidence="5">Mediates the cap-independent, EIF4E-dependent translation of viral genomic RNAs (By similarity). Binds to the cap-binding site of host EIF4E and thus interferes with the host EIF4E-dependent mRNA export and translation (By similarity). VPg-RNA directly binds EIF4E and is a template for transcription (By similarity). Also forms trimeric complexes with EIF4E-EIF4G, which are templates for translation (By similarity).</text>
</comment>
<comment type="function">
    <molecule>Nuclear inclusion protein A</molecule>
    <text evidence="2">Has RNA-binding and proteolytic activities.</text>
</comment>
<comment type="function">
    <molecule>Nuclear inclusion protein B</molecule>
    <text>An RNA-dependent RNA polymerase that plays an essential role in the virus replication.</text>
</comment>
<comment type="function">
    <molecule>Capsid protein</molecule>
    <text evidence="2">Involved in aphid transmission, cell-to-cell and systemis movement, encapsidation of the viral RNA and in the regulation of viral RNA amplification.</text>
</comment>
<comment type="catalytic activity">
    <reaction evidence="8">
        <text>RNA(n) + a ribonucleoside 5'-triphosphate = RNA(n+1) + diphosphate</text>
        <dbReference type="Rhea" id="RHEA:21248"/>
        <dbReference type="Rhea" id="RHEA-COMP:14527"/>
        <dbReference type="Rhea" id="RHEA-COMP:17342"/>
        <dbReference type="ChEBI" id="CHEBI:33019"/>
        <dbReference type="ChEBI" id="CHEBI:61557"/>
        <dbReference type="ChEBI" id="CHEBI:140395"/>
        <dbReference type="EC" id="2.7.7.48"/>
    </reaction>
</comment>
<comment type="catalytic activity">
    <reaction evidence="2">
        <text>Hydrolyzes glutaminyl bonds, and activity is further restricted by preferences for the amino acids in P6 - P1' that vary with the species of potyvirus, e.g. Glu-Xaa-Xaa-Tyr-Xaa-Gln-|-(Ser or Gly) for the enzyme from tobacco etch virus. The natural substrate is the viral polyprotein, but other proteins and oligopeptides containing the appropriate consensus sequence are also cleaved.</text>
        <dbReference type="EC" id="3.4.22.44"/>
    </reaction>
</comment>
<comment type="catalytic activity">
    <reaction evidence="2">
        <text>Hydrolyzes a Gly-|-Gly bond at its own C-terminus, commonly in the sequence -Tyr-Xaa-Val-Gly-|-Gly, in the processing of the potyviral polyprotein.</text>
        <dbReference type="EC" id="3.4.22.45"/>
    </reaction>
</comment>
<comment type="subunit">
    <molecule>Viral genome-linked protein</molecule>
    <text evidence="5">Interacts with host eIF4E protein (via cap-binding region); this interaction mediates the translation of the VPg-viral RNA conjugates (By similarity). Part of a complex that comprises VPg, RNA, host EIF4E and EIF4G; this interaction mediates the translation of the VPg-viral RNA conjugates (By similarity).</text>
</comment>
<comment type="subcellular location">
    <molecule>6 kDa protein 1</molecule>
    <subcellularLocation>
        <location>Host cytoplasmic vesicle</location>
    </subcellularLocation>
    <text evidence="4">Probably colocalizes with 6K2-induced vesicles associated with host chloroplasts.</text>
</comment>
<comment type="subcellular location">
    <molecule>6 kDa protein 2</molecule>
    <subcellularLocation>
        <location evidence="3">Host cytoplasmic vesicle</location>
    </subcellularLocation>
    <text evidence="3">6K-induced vesicles associate with host chloroplasts.</text>
</comment>
<comment type="subcellular location">
    <molecule>Viral genome-linked protein</molecule>
    <subcellularLocation>
        <location evidence="6">Host nucleus</location>
    </subcellularLocation>
    <text evidence="6">Binds to host plant eIF4E proteins in the host nucleus.</text>
</comment>
<comment type="subcellular location">
    <molecule>Capsid protein</molecule>
    <subcellularLocation>
        <location evidence="15">Virion</location>
    </subcellularLocation>
</comment>
<comment type="alternative products">
    <event type="ribosomal frameshifting"/>
    <isoform>
        <id>Q01901-1</id>
        <name>Genome polyprotein</name>
        <sequence type="displayed"/>
    </isoform>
    <isoform>
        <id>P0CJ98-1</id>
        <name>P3N-PIPO polyprotein</name>
        <sequence type="external"/>
    </isoform>
</comment>
<comment type="domain">
    <molecule>Helper component proteinase</molecule>
    <text>The N-terminus is involved in interaction with stylets. The central part is involved in interaction with virions and the C-terminus is involved in cell-to cell movement of the virus.</text>
</comment>
<comment type="PTM">
    <molecule>Viral genome-linked protein</molecule>
    <text evidence="3">VPg is uridylylated by the polymerase and is covalently attached to the 5'-end of the genomic RNA. This uridylylated form acts as a nucleotide-peptide primer for the polymerase (By similarity).</text>
</comment>
<comment type="PTM">
    <molecule>Genome polyprotein</molecule>
    <text evidence="1">Potyviral RNA is expressed as two polyproteins which undergo post-translational proteolytic processing. Genome polyprotein is processed by NIa-pro, P1 and HC-pro proteinases resulting in the production of at least ten individual proteins. P3N-PIPO polyprotein is cleaved by P1 and HC-pro proteinases resulting in the production of three individual proteins. The P1 proteinase and the HC-pro cleave only their respective C-termini autocatalytically. 6K1 is essential for proper proteolytic separation of P3 from CI (By similarity).</text>
</comment>
<comment type="miscellaneous">
    <molecule>Isoform Genome polyprotein</molecule>
    <text>Produced by conventional translation.</text>
</comment>
<comment type="similarity">
    <text evidence="15">Belongs to the potyviridae genome polyprotein family.</text>
</comment>
<organismHost>
    <name type="scientific">Carica papaya</name>
    <name type="common">Papaya</name>
    <dbReference type="NCBI Taxonomy" id="3649"/>
</organismHost>
<name>POLG_PRSVH</name>
<dbReference type="EC" id="3.4.-.-" evidence="2"/>
<dbReference type="EC" id="3.4.22.45" evidence="2"/>
<dbReference type="EC" id="3.6.4.-"/>
<dbReference type="EC" id="3.4.22.44"/>
<dbReference type="EC" id="2.7.7.48"/>
<dbReference type="EMBL" id="X67673">
    <property type="protein sequence ID" value="CAA47905.1"/>
    <property type="molecule type" value="Genomic_RNA"/>
</dbReference>
<dbReference type="EMBL" id="S46722">
    <property type="protein sequence ID" value="AAB23789.1"/>
    <property type="molecule type" value="Genomic_RNA"/>
</dbReference>
<dbReference type="EMBL" id="X67672">
    <property type="protein sequence ID" value="CAA47904.1"/>
    <property type="molecule type" value="Genomic_RNA"/>
</dbReference>
<dbReference type="PIR" id="JQ1899">
    <property type="entry name" value="JQ1899"/>
</dbReference>
<dbReference type="RefSeq" id="NP_056758.1">
    <property type="nucleotide sequence ID" value="NC_001785.1"/>
</dbReference>
<dbReference type="MEROPS" id="C04.009"/>
<dbReference type="GeneID" id="1494043"/>
<dbReference type="KEGG" id="vg:1494043"/>
<dbReference type="Proteomes" id="UP000006688">
    <property type="component" value="Segment"/>
</dbReference>
<dbReference type="Proteomes" id="UP000007380">
    <property type="component" value="Genome"/>
</dbReference>
<dbReference type="GO" id="GO:0019029">
    <property type="term" value="C:helical viral capsid"/>
    <property type="evidence" value="ECO:0007669"/>
    <property type="project" value="UniProtKB-KW"/>
</dbReference>
<dbReference type="GO" id="GO:0044161">
    <property type="term" value="C:host cell cytoplasmic vesicle"/>
    <property type="evidence" value="ECO:0007669"/>
    <property type="project" value="UniProtKB-SubCell"/>
</dbReference>
<dbReference type="GO" id="GO:0042025">
    <property type="term" value="C:host cell nucleus"/>
    <property type="evidence" value="ECO:0007669"/>
    <property type="project" value="UniProtKB-SubCell"/>
</dbReference>
<dbReference type="GO" id="GO:0005524">
    <property type="term" value="F:ATP binding"/>
    <property type="evidence" value="ECO:0007669"/>
    <property type="project" value="UniProtKB-KW"/>
</dbReference>
<dbReference type="GO" id="GO:0004197">
    <property type="term" value="F:cysteine-type endopeptidase activity"/>
    <property type="evidence" value="ECO:0007669"/>
    <property type="project" value="InterPro"/>
</dbReference>
<dbReference type="GO" id="GO:0004386">
    <property type="term" value="F:helicase activity"/>
    <property type="evidence" value="ECO:0007669"/>
    <property type="project" value="UniProtKB-KW"/>
</dbReference>
<dbReference type="GO" id="GO:0016818">
    <property type="term" value="F:hydrolase activity, acting on acid anhydrides, in phosphorus-containing anhydrides"/>
    <property type="evidence" value="ECO:0007669"/>
    <property type="project" value="InterPro"/>
</dbReference>
<dbReference type="GO" id="GO:0003723">
    <property type="term" value="F:RNA binding"/>
    <property type="evidence" value="ECO:0007669"/>
    <property type="project" value="InterPro"/>
</dbReference>
<dbReference type="GO" id="GO:0003968">
    <property type="term" value="F:RNA-directed RNA polymerase activity"/>
    <property type="evidence" value="ECO:0007669"/>
    <property type="project" value="UniProtKB-KW"/>
</dbReference>
<dbReference type="GO" id="GO:0008236">
    <property type="term" value="F:serine-type peptidase activity"/>
    <property type="evidence" value="ECO:0007669"/>
    <property type="project" value="UniProtKB-KW"/>
</dbReference>
<dbReference type="GO" id="GO:0005198">
    <property type="term" value="F:structural molecule activity"/>
    <property type="evidence" value="ECO:0007669"/>
    <property type="project" value="InterPro"/>
</dbReference>
<dbReference type="GO" id="GO:0006351">
    <property type="term" value="P:DNA-templated transcription"/>
    <property type="evidence" value="ECO:0007669"/>
    <property type="project" value="InterPro"/>
</dbReference>
<dbReference type="GO" id="GO:0006508">
    <property type="term" value="P:proteolysis"/>
    <property type="evidence" value="ECO:0007669"/>
    <property type="project" value="UniProtKB-KW"/>
</dbReference>
<dbReference type="GO" id="GO:0052170">
    <property type="term" value="P:symbiont-mediated suppression of host innate immune response"/>
    <property type="evidence" value="ECO:0007669"/>
    <property type="project" value="UniProtKB-KW"/>
</dbReference>
<dbReference type="GO" id="GO:0039694">
    <property type="term" value="P:viral RNA genome replication"/>
    <property type="evidence" value="ECO:0007669"/>
    <property type="project" value="InterPro"/>
</dbReference>
<dbReference type="GO" id="GO:0075523">
    <property type="term" value="P:viral translational frameshifting"/>
    <property type="evidence" value="ECO:0007669"/>
    <property type="project" value="UniProtKB-KW"/>
</dbReference>
<dbReference type="CDD" id="cd23175">
    <property type="entry name" value="ps-ssRNAv_Potyviridae_RdRp"/>
    <property type="match status" value="1"/>
</dbReference>
<dbReference type="Gene3D" id="3.30.70.270">
    <property type="match status" value="1"/>
</dbReference>
<dbReference type="Gene3D" id="3.90.70.150">
    <property type="entry name" value="Helper component proteinase"/>
    <property type="match status" value="1"/>
</dbReference>
<dbReference type="Gene3D" id="3.40.50.300">
    <property type="entry name" value="P-loop containing nucleotide triphosphate hydrolases"/>
    <property type="match status" value="2"/>
</dbReference>
<dbReference type="Gene3D" id="2.40.10.10">
    <property type="entry name" value="Trypsin-like serine proteases"/>
    <property type="match status" value="2"/>
</dbReference>
<dbReference type="InterPro" id="IPR011545">
    <property type="entry name" value="DEAD/DEAH_box_helicase_dom"/>
</dbReference>
<dbReference type="InterPro" id="IPR043502">
    <property type="entry name" value="DNA/RNA_pol_sf"/>
</dbReference>
<dbReference type="InterPro" id="IPR022199">
    <property type="entry name" value="DUF3725"/>
</dbReference>
<dbReference type="InterPro" id="IPR001456">
    <property type="entry name" value="HC-pro"/>
</dbReference>
<dbReference type="InterPro" id="IPR031159">
    <property type="entry name" value="HC_PRO_CPD_dom"/>
</dbReference>
<dbReference type="InterPro" id="IPR042308">
    <property type="entry name" value="HC_PRO_CPD_sf"/>
</dbReference>
<dbReference type="InterPro" id="IPR014001">
    <property type="entry name" value="Helicase_ATP-bd"/>
</dbReference>
<dbReference type="InterPro" id="IPR001650">
    <property type="entry name" value="Helicase_C-like"/>
</dbReference>
<dbReference type="InterPro" id="IPR027417">
    <property type="entry name" value="P-loop_NTPase"/>
</dbReference>
<dbReference type="InterPro" id="IPR002540">
    <property type="entry name" value="Pept_S30_P1_potyvir"/>
</dbReference>
<dbReference type="InterPro" id="IPR009003">
    <property type="entry name" value="Peptidase_S1_PA"/>
</dbReference>
<dbReference type="InterPro" id="IPR043504">
    <property type="entry name" value="Peptidase_S1_PA_chymotrypsin"/>
</dbReference>
<dbReference type="InterPro" id="IPR001592">
    <property type="entry name" value="Poty_coat"/>
</dbReference>
<dbReference type="InterPro" id="IPR001730">
    <property type="entry name" value="Potyv_NIa-pro_dom"/>
</dbReference>
<dbReference type="InterPro" id="IPR039560">
    <property type="entry name" value="Potyvirid-P3"/>
</dbReference>
<dbReference type="InterPro" id="IPR013648">
    <property type="entry name" value="PP_Potyviridae"/>
</dbReference>
<dbReference type="InterPro" id="IPR043128">
    <property type="entry name" value="Rev_trsase/Diguanyl_cyclase"/>
</dbReference>
<dbReference type="InterPro" id="IPR001205">
    <property type="entry name" value="RNA-dir_pol_C"/>
</dbReference>
<dbReference type="InterPro" id="IPR007094">
    <property type="entry name" value="RNA-dir_pol_PSvirus"/>
</dbReference>
<dbReference type="PANTHER" id="PTHR43519">
    <property type="entry name" value="ATP-DEPENDENT RNA HELICASE HRPB"/>
    <property type="match status" value="1"/>
</dbReference>
<dbReference type="PANTHER" id="PTHR43519:SF1">
    <property type="entry name" value="ATP-DEPENDENT RNA HELICASE HRPB"/>
    <property type="match status" value="1"/>
</dbReference>
<dbReference type="Pfam" id="PF00270">
    <property type="entry name" value="DEAD"/>
    <property type="match status" value="1"/>
</dbReference>
<dbReference type="Pfam" id="PF12523">
    <property type="entry name" value="DUF3725"/>
    <property type="match status" value="1"/>
</dbReference>
<dbReference type="Pfam" id="PF00271">
    <property type="entry name" value="Helicase_C"/>
    <property type="match status" value="1"/>
</dbReference>
<dbReference type="Pfam" id="PF00863">
    <property type="entry name" value="Peptidase_C4"/>
    <property type="match status" value="1"/>
</dbReference>
<dbReference type="Pfam" id="PF00851">
    <property type="entry name" value="Peptidase_C6"/>
    <property type="match status" value="1"/>
</dbReference>
<dbReference type="Pfam" id="PF01577">
    <property type="entry name" value="Peptidase_S30"/>
    <property type="match status" value="1"/>
</dbReference>
<dbReference type="Pfam" id="PF00767">
    <property type="entry name" value="Poty_coat"/>
    <property type="match status" value="1"/>
</dbReference>
<dbReference type="Pfam" id="PF08440">
    <property type="entry name" value="Poty_PP"/>
    <property type="match status" value="1"/>
</dbReference>
<dbReference type="Pfam" id="PF13608">
    <property type="entry name" value="Potyvirid-P3"/>
    <property type="match status" value="1"/>
</dbReference>
<dbReference type="Pfam" id="PF00680">
    <property type="entry name" value="RdRP_1"/>
    <property type="match status" value="1"/>
</dbReference>
<dbReference type="PRINTS" id="PR00966">
    <property type="entry name" value="NIAPOTYPTASE"/>
</dbReference>
<dbReference type="SMART" id="SM00487">
    <property type="entry name" value="DEXDc"/>
    <property type="match status" value="1"/>
</dbReference>
<dbReference type="SMART" id="SM00490">
    <property type="entry name" value="HELICc"/>
    <property type="match status" value="1"/>
</dbReference>
<dbReference type="SUPFAM" id="SSF56672">
    <property type="entry name" value="DNA/RNA polymerases"/>
    <property type="match status" value="1"/>
</dbReference>
<dbReference type="SUPFAM" id="SSF52540">
    <property type="entry name" value="P-loop containing nucleoside triphosphate hydrolases"/>
    <property type="match status" value="2"/>
</dbReference>
<dbReference type="SUPFAM" id="SSF50494">
    <property type="entry name" value="Trypsin-like serine proteases"/>
    <property type="match status" value="1"/>
</dbReference>
<dbReference type="PROSITE" id="PS51744">
    <property type="entry name" value="HC_PRO_CPD"/>
    <property type="match status" value="1"/>
</dbReference>
<dbReference type="PROSITE" id="PS51192">
    <property type="entry name" value="HELICASE_ATP_BIND_1"/>
    <property type="match status" value="1"/>
</dbReference>
<dbReference type="PROSITE" id="PS51194">
    <property type="entry name" value="HELICASE_CTER"/>
    <property type="match status" value="1"/>
</dbReference>
<dbReference type="PROSITE" id="PS51436">
    <property type="entry name" value="POTYVIRUS_NIA_PRO"/>
    <property type="match status" value="1"/>
</dbReference>
<dbReference type="PROSITE" id="PS51871">
    <property type="entry name" value="PV_P1_PRO"/>
    <property type="match status" value="1"/>
</dbReference>
<dbReference type="PROSITE" id="PS50507">
    <property type="entry name" value="RDRP_SSRNA_POS"/>
    <property type="match status" value="1"/>
</dbReference>
<accession>Q01901</accession>
<feature type="chain" id="PRO_0000420010" description="Genome polyprotein">
    <location>
        <begin position="1"/>
        <end position="3344"/>
    </location>
</feature>
<feature type="chain" id="PRO_0000040361" description="P1 proteinase" evidence="1">
    <location>
        <begin position="1"/>
        <end position="547"/>
    </location>
</feature>
<feature type="chain" id="PRO_0000040362" description="Helper component proteinase" evidence="1">
    <location>
        <begin position="548"/>
        <end position="1004"/>
    </location>
</feature>
<feature type="chain" id="PRO_0000040363" description="Protein P3" evidence="1">
    <location>
        <begin position="1005"/>
        <end position="1349"/>
    </location>
</feature>
<feature type="chain" id="PRO_0000040364" description="6 kDa protein 1" evidence="1">
    <location>
        <begin position="1350"/>
        <end position="1401"/>
    </location>
</feature>
<feature type="chain" id="PRO_0000040365" description="Cytoplasmic inclusion protein" evidence="1">
    <location>
        <begin position="1402"/>
        <end position="2036"/>
    </location>
</feature>
<feature type="chain" id="PRO_0000040366" description="6 kDa protein 2" evidence="1">
    <location>
        <begin position="2037"/>
        <end position="2093"/>
    </location>
</feature>
<feature type="chain" id="PRO_0000040367" description="Viral genome-linked protein" evidence="1">
    <location>
        <begin position="2094"/>
        <end position="2282"/>
    </location>
</feature>
<feature type="chain" id="PRO_0000040368" description="Nuclear inclusion protein A" evidence="1">
    <location>
        <begin position="2283"/>
        <end position="2520"/>
    </location>
</feature>
<feature type="chain" id="PRO_0000040369" description="Nuclear inclusion protein B" evidence="1">
    <location>
        <begin position="2521"/>
        <end position="3057"/>
    </location>
</feature>
<feature type="chain" id="PRO_0000040370" description="Capsid protein" evidence="1">
    <location>
        <begin position="3058"/>
        <end position="3344"/>
    </location>
</feature>
<feature type="domain" description="Peptidase S30" evidence="13">
    <location>
        <begin position="408"/>
        <end position="547"/>
    </location>
</feature>
<feature type="domain" description="Peptidase C6" evidence="12">
    <location>
        <begin position="882"/>
        <end position="1004"/>
    </location>
</feature>
<feature type="domain" description="Helicase ATP-binding" evidence="9">
    <location>
        <begin position="1473"/>
        <end position="1625"/>
    </location>
</feature>
<feature type="domain" description="Helicase C-terminal" evidence="10">
    <location>
        <begin position="1644"/>
        <end position="1803"/>
    </location>
</feature>
<feature type="domain" description="Peptidase C4" evidence="11">
    <location>
        <begin position="2283"/>
        <end position="2499"/>
    </location>
</feature>
<feature type="domain" description="RdRp catalytic" evidence="8">
    <location>
        <begin position="2761"/>
        <end position="2885"/>
    </location>
</feature>
<feature type="region of interest" description="Disordered" evidence="14">
    <location>
        <begin position="3059"/>
        <end position="3116"/>
    </location>
</feature>
<feature type="short sequence motif" description="Involved in interaction with stylet and aphid transmission" evidence="1">
    <location>
        <begin position="598"/>
        <end position="601"/>
    </location>
</feature>
<feature type="short sequence motif" description="Involved in virions binding and aphid transmission" evidence="1">
    <location>
        <begin position="856"/>
        <end position="858"/>
    </location>
</feature>
<feature type="short sequence motif" description="DECH box">
    <location>
        <begin position="1575"/>
        <end position="1578"/>
    </location>
</feature>
<feature type="short sequence motif" description="Nuclear localization signal" evidence="7">
    <location>
        <begin position="2134"/>
        <end position="2141"/>
    </location>
</feature>
<feature type="compositionally biased region" description="Basic and acidic residues" evidence="14">
    <location>
        <begin position="3059"/>
        <end position="3093"/>
    </location>
</feature>
<feature type="active site" description="For P1 proteinase activity" evidence="13">
    <location>
        <position position="456"/>
    </location>
</feature>
<feature type="active site" description="For P1 proteinase activity" evidence="13">
    <location>
        <position position="465"/>
    </location>
</feature>
<feature type="active site" description="For P1 proteinase activity" evidence="13">
    <location>
        <position position="499"/>
    </location>
</feature>
<feature type="active site" description="For helper component proteinase activity" evidence="12">
    <location>
        <position position="890"/>
    </location>
</feature>
<feature type="active site" description="For helper component proteinase activity" evidence="12">
    <location>
        <position position="963"/>
    </location>
</feature>
<feature type="active site" description="For nuclear inclusion protein A activity" evidence="11">
    <location>
        <position position="2327"/>
    </location>
</feature>
<feature type="active site" description="For nuclear inclusion protein A activity" evidence="11">
    <location>
        <position position="2362"/>
    </location>
</feature>
<feature type="active site" description="For nuclear inclusion protein A activity" evidence="11">
    <location>
        <position position="2431"/>
    </location>
</feature>
<feature type="binding site" evidence="9">
    <location>
        <begin position="1486"/>
        <end position="1493"/>
    </location>
    <ligand>
        <name>ATP</name>
        <dbReference type="ChEBI" id="CHEBI:30616"/>
    </ligand>
</feature>
<feature type="site" description="Cleavage; by P1 proteinase" evidence="13">
    <location>
        <begin position="547"/>
        <end position="548"/>
    </location>
</feature>
<feature type="site" description="Cleavage; by autolysis" evidence="12">
    <location>
        <begin position="1004"/>
        <end position="1005"/>
    </location>
</feature>
<feature type="site" description="Cleavage; by NIa-pro" evidence="1">
    <location>
        <begin position="1349"/>
        <end position="1350"/>
    </location>
</feature>
<feature type="site" description="Cleavage; by NIa-pro" evidence="1">
    <location>
        <begin position="1401"/>
        <end position="1402"/>
    </location>
</feature>
<feature type="site" description="Cleavage; by NIa-pro" evidence="1">
    <location>
        <begin position="2036"/>
        <end position="2037"/>
    </location>
</feature>
<feature type="site" description="Cleavage; by NIa-pro" evidence="1">
    <location>
        <begin position="2093"/>
        <end position="2094"/>
    </location>
</feature>
<feature type="site" description="Cleavage; by NIa-pro" evidence="1">
    <location>
        <begin position="2282"/>
        <end position="2283"/>
    </location>
</feature>
<feature type="site" description="Cleavage; by NIa-pro" evidence="1">
    <location>
        <begin position="2520"/>
        <end position="2521"/>
    </location>
</feature>
<feature type="site" description="Cleavage; by NIa-pro" evidence="1">
    <location>
        <begin position="3057"/>
        <end position="3058"/>
    </location>
</feature>
<feature type="modified residue" description="O-(5'-phospho-RNA)-tyrosine" evidence="3">
    <location>
        <position position="2156"/>
    </location>
</feature>
<sequence length="3344" mass="381046">MSSLYTLRAAAQYDRRLESKKGSGWVEHKLERKGERGNTHYCSEFDISKGAKILQLVQIGNTEVGRTFLEGNRFVRANIFEIIRKTMVGRLGYDFESELWVCRNCDKTSEKYFKKCDCGETYYYSERNLMRTMNDLMYQFDMTPSEINSVDLEYLANAVDYAEQLVKRSQVPEPVELAMMEPIVASGEGILMVSEPEVMPVTTKVEEAWTIQIGEIPVPLVVIKETPVISGVEGTLNSTGFSLEADITKLVEKEILQEEVKEAVHLALEVGNEIAEKKPELKLIPYWSASLELHKRIRKHKEHAKIAAIQVQKEREKDQKVFSALELRLNLKSRRRNQAVVCDKRGTLKWETQRGHKKSKLMQQASDFVVTQIHCDFGCKTQYSEPHIPGIKQSTSKKICKPRKHSRIVGNSKINYIMKNLCDTIIERGIPVELVTKRCKRRILQKEGRSYVQLRHMNGIRARQDVSSSPDMELLFTQFCKFLVGHKPLKSKNLTFGSSGLIFKPKFADNVGRYFGDYFVVRGRLGGKLFDGRSKLARSVYAKMDQYNDVAEKFWLGFNRAFLRHRKPTDHTCTSDMDVTMCGEVAALATIILFPCHKITCNTCMSKVKGRVIDEVGEDLNCELERLRETLSAYGGSFGHVSTLLDQLNRVLNARNMNDGAFKEIAKKIDEKKESPWTHMTTINNTLYKGSLATGYEFERASNSLREIVRWHLKRTESIKAGSVESFRNKRSGKAHFNPALTCDNQLDKNGNFLWGERQYHAKRFFANYFEKIDHSKGYEYYSQRQNPNGIRKIAIGNLVFSTNLERFRQQMVEHHIDQGPITRECIALRNNNYVHVCSCVTLDDGTPATSELKTPTKNHIVLGNSGDPKYVDLPTLESDSMYIAKKGYCYMNIFLAMLINIPENEAKDFTKRVRDLVGSKLGEWPTMLDVATCANQLVVFHPDAANAELPQILVDHRQKTMHVIDSFGSVDSGYHILKANTVNQLIQFARDPLDSEMKHYIVGGEFDPTTNCLHQLIRVIYKPHELRSLLRNEPYLIVIALMSPSVLLTLFNSGAVEHALNYWIKRDQDVVEVIVLVEQLCRKVTLARTILEQFNEIRQNARDLHELMDRNNKPWISYDRSLELLSVYANSQLTDEGLLKQGFSTLDPRLREAVEKTYATLLQEEWRALSLFQKLHLRYFAFKSQPSFSEYLKPKGRADLKIVYDFSPKYCVHEVGKAFLLPVKAGAKIASRIINGCGAFIRKSAAKGCAYIFKDLFQFVHVVLVLSILLQIFRSAQGIATEHLQLKQAKAEVERQKDFDRLEALYAELCVKSGEQPTTEEFLDFVMEREPRLKDQAYNLIYIPVIHQAKSDNEKKLEQVIAFITLILMMIDVDKSDCVYRILNKFKGVINSSNTNVYHQSLDDIRDFYEDKQLTIDFDITGENQINRGPIDVTFEKWWDNQLSNNNTIGHYRIGGTFVEFSRVNAATVASEIAHSPEREFLVRGAVGSGKSTNLPFLLSKHGSVLLIEPTRPLCENVCKQLRGEPFHCNPTIRMRGLTAFGSTNITIMTSGFALHYYAHNIQQLRLFDFIIFDECHVIDSQAMAFYCLMEGNAIEKKILKVSATPPGREVEFSTQFPTKIVTEQSISFKQLVDNFGTGANSDVTAFADNILVYVASYNEVDQLSKLLSDKGYLVTKIDGRTMKVGKTEISTSGTKFKKHFIVATNIIENGVTLDIEAVIDFGMKVVPEMDSDNRMIRYSKQAISFGERIQRLGRVGRHKEGIALRIGHTEKGIQEIPEMAATEAAFLSFTYGLPVMTHNVGLSLLKNCTVRQARTMQQYELSPFFTQNLVNFDGTVHPKIDVLLRPYKLRDCEVRLSEAAIPHGVQSIWLSARDYEAVGGRLCLEGDVRIPFLIKDVPERLYKELWDIVQTYKRDFTFGRINSVSAGKIAYTLRTDVYSIPRTLITIDKLIESENMKHAHFKAMTSCTGLNSSFSLLGVINTIQSRYLVDHSVENIRKLQLAKAQIQQLEAHMQENNVENLIQSLGAVRAVYHQSVDGFKHIKRELGLKGVWDGSLMIKDAIVCGFTMAGGAMLLYQHFRDKFTNVHVFHQGFSARQRQKLRFKSAANAKLGREVYGDDGTIEHYFGEAYTKKGNKKGKMHGMGVKTRKFVATYGFKPEDYSYVRYLDPLTGETLDESPQTDISMVQDHFSDIRRKYMDSDSFDRQALIANNTIKAYYVRNSAKAALEVDLTPHNPLKVCDNKLTIAGFPDREAELRQTGPPRTIQVDQVPPPSKSVHHEGKSLCQGMRNYNGIASVVCHLKNTSGKGKSLFGIGYNSFIITNRHLFKENNGELIVKSQHGKFIVKNTTTLQIAPVGKTDLLIIRMPKDFPPFHSRARFRAMKAGDKVCMIGVDYQENHIASKVSETSIISEGTGDFGCHWISTNDGDCGNPLVSVSDGFIVGLHSLSTSTGDQNFFAKIPAQFEEKVLRKIDDLTWSKHWSYNINELSWGALKVWESRPEAIFNAQKEVNQLNVFEQSGGRWLFDKLHGNLKGVSSAPSNLVTKHVVKGICPLFRNYLECDEEAKAFFSPLMGHYMKSVLSKEAYIKDLLKYSSDIVVGEVNHDVFEDSVAQVIELLNDHECPELEYITDSEVIIQALNMDAAVGALYTGKKRKYFEGSTVEHRQALVRKSCERLYEGRMGVWNGSLKAELRPAEKVLAKKTRSFTAAPLDTLLGAKVCVDDFNNWFYSKNMECPWTVGMTKFYKGWDEFLKKFPDGWVYCDADGSQFDSSLTPYLLNAVLSIRLWAMEDWDIGEQMLKNLYGEITYTPILTPDGTIVKKFKGNNSGQPSTVVDNTLMVLITMYYALRKAGYDTKTQEDMCVFYINGDDLCIAIHPDHEHVLDSFSSSFAELGLKYDFAQRHRNKQNLWFMSHRGILIDDIYIPKLEPERIVAILEWDKSKLPEHRLEAITAAMIESWGYGDLTHQIRRFYQWVLEQAPFNELAKQGRAPYVSEVGLRRLYTSERGSMDELEAYIDKYFERERGDSPELLVYHESRGTDDYQLVCSNNTHVFHQSKNEAVDAGLNEKLKEKEKQKEKEKEKQKEKEKDGASDGNDVSTSTKTGERDRDVNVGTSGTFTVPRIKSFTDKMVLPRIKGKTVLNLNHLLQYNPQQIDISNTRATHSQFEKWYEGVRNDYGLNDNEMQVMLNGLMVWCIENGTSPDISGVWVMMDGETQVDYPIKPLIEHATPSFRQIMAHFSNAAEAYIAKRNATERYMPRYGIKRNLTDISLARYAFDFYEVNSKTPDRAREAHMQMKAAALRNTSRRMFGMDGSVSNKEENTERHTVEDVNRDMHSLLGMRN</sequence>
<organism>
    <name type="scientific">Papaya ringspot virus (strain P / mutant HA)</name>
    <dbReference type="NCBI Taxonomy" id="31731"/>
    <lineage>
        <taxon>Viruses</taxon>
        <taxon>Riboviria</taxon>
        <taxon>Orthornavirae</taxon>
        <taxon>Pisuviricota</taxon>
        <taxon>Stelpaviricetes</taxon>
        <taxon>Patatavirales</taxon>
        <taxon>Potyviridae</taxon>
        <taxon>Potyvirus</taxon>
        <taxon>Potyvirus papayanuli</taxon>
        <taxon>Papaya ringspot virus</taxon>
    </lineage>
</organism>
<keyword id="KW-0067">ATP-binding</keyword>
<keyword id="KW-0167">Capsid protein</keyword>
<keyword id="KW-0191">Covalent protein-RNA linkage</keyword>
<keyword id="KW-1139">Helical capsid protein</keyword>
<keyword id="KW-0347">Helicase</keyword>
<keyword id="KW-1036">Host cytoplasmic vesicle</keyword>
<keyword id="KW-1048">Host nucleus</keyword>
<keyword id="KW-0945">Host-virus interaction</keyword>
<keyword id="KW-0378">Hydrolase</keyword>
<keyword id="KW-1090">Inhibition of host innate immune response by virus</keyword>
<keyword id="KW-0547">Nucleotide-binding</keyword>
<keyword id="KW-0548">Nucleotidyltransferase</keyword>
<keyword id="KW-0597">Phosphoprotein</keyword>
<keyword id="KW-0645">Protease</keyword>
<keyword id="KW-0688">Ribosomal frameshifting</keyword>
<keyword id="KW-0696">RNA-directed RNA polymerase</keyword>
<keyword id="KW-0720">Serine protease</keyword>
<keyword id="KW-0941">Suppressor of RNA silencing</keyword>
<keyword id="KW-0788">Thiol protease</keyword>
<keyword id="KW-0808">Transferase</keyword>
<keyword id="KW-0899">Viral immunoevasion</keyword>
<keyword id="KW-0693">Viral RNA replication</keyword>
<keyword id="KW-0946">Virion</keyword>
<proteinExistence type="inferred from homology"/>
<reference key="1">
    <citation type="journal article" date="1994" name="Phytopathology">
        <title>Comparison of the nuclear inclusion b protein and coat protein genes of five papaya ringspot virus strains distinct in geographic origin and pathogenicity.</title>
        <authorList>
            <person name="Wang C.H."/>
            <person name="Bau H.J."/>
            <person name="Yeh S.D."/>
        </authorList>
        <dbReference type="AGRICOLA" id="IND20450567"/>
    </citation>
    <scope>NUCLEOTIDE SEQUENCE [GENOMIC RNA]</scope>
</reference>
<reference key="2">
    <citation type="journal article" date="1992" name="J. Gen. Virol.">
        <title>Complete nucleotide sequence and genetic organization of papaya ringspot virus RNA.</title>
        <authorList>
            <person name="Yeh S.D."/>
            <person name="Jan F.J."/>
            <person name="Chiang C.H."/>
            <person name="Doong T.J."/>
            <person name="Chen M.C."/>
            <person name="Chung P.H."/>
            <person name="Bau H.J."/>
        </authorList>
    </citation>
    <scope>NUCLEOTIDE SEQUENCE [GENOMIC RNA]</scope>
</reference>
<reference key="3">
    <citation type="journal article" date="1992" name="Arch. Virol.">
        <title>Nucleotide sequence comparison of the 3'-terminal regions of severe, mild, and non-papaya infecting strains of papaya ringspot virus.</title>
        <authorList>
            <person name="Wang C.H."/>
            <person name="Yeh S.D."/>
        </authorList>
    </citation>
    <scope>NUCLEOTIDE SEQUENCE [GENOMIC RNA] OF 2561-3344</scope>
</reference>
<reference key="4">
    <citation type="journal article" date="2001" name="Virus Res.">
        <title>Potyvirus proteins: a wealth of functions.</title>
        <authorList>
            <person name="Urcuqui-Inchima S."/>
            <person name="Haenni A.L."/>
            <person name="Bernardi F."/>
        </authorList>
    </citation>
    <scope>REVIEW</scope>
</reference>
<evidence type="ECO:0000250" key="1"/>
<evidence type="ECO:0000250" key="2">
    <source>
        <dbReference type="UniProtKB" id="P04517"/>
    </source>
</evidence>
<evidence type="ECO:0000250" key="3">
    <source>
        <dbReference type="UniProtKB" id="P09814"/>
    </source>
</evidence>
<evidence type="ECO:0000250" key="4">
    <source>
        <dbReference type="UniProtKB" id="P13529"/>
    </source>
</evidence>
<evidence type="ECO:0000250" key="5">
    <source>
        <dbReference type="UniProtKB" id="P18247"/>
    </source>
</evidence>
<evidence type="ECO:0000250" key="6">
    <source>
        <dbReference type="UniProtKB" id="P21231"/>
    </source>
</evidence>
<evidence type="ECO:0000255" key="7"/>
<evidence type="ECO:0000255" key="8">
    <source>
        <dbReference type="PROSITE-ProRule" id="PRU00539"/>
    </source>
</evidence>
<evidence type="ECO:0000255" key="9">
    <source>
        <dbReference type="PROSITE-ProRule" id="PRU00541"/>
    </source>
</evidence>
<evidence type="ECO:0000255" key="10">
    <source>
        <dbReference type="PROSITE-ProRule" id="PRU00542"/>
    </source>
</evidence>
<evidence type="ECO:0000255" key="11">
    <source>
        <dbReference type="PROSITE-ProRule" id="PRU00766"/>
    </source>
</evidence>
<evidence type="ECO:0000255" key="12">
    <source>
        <dbReference type="PROSITE-ProRule" id="PRU01080"/>
    </source>
</evidence>
<evidence type="ECO:0000255" key="13">
    <source>
        <dbReference type="PROSITE-ProRule" id="PRU01219"/>
    </source>
</evidence>
<evidence type="ECO:0000256" key="14">
    <source>
        <dbReference type="SAM" id="MobiDB-lite"/>
    </source>
</evidence>
<evidence type="ECO:0000305" key="15"/>